<protein>
    <recommendedName>
        <fullName evidence="1">Large ribosomal subunit protein bL9</fullName>
    </recommendedName>
    <alternativeName>
        <fullName evidence="2">50S ribosomal protein L9</fullName>
    </alternativeName>
</protein>
<sequence length="150" mass="16352">MKVVFLEDVKGQGKKGQIKEVPTGYAQNFLIKKNLAKVATAAALSEVKGQAKAKEKEEAEFLAEAKALKEVLEKDETVVEIKMKVGQTGHTFGAVDKADIAKALKSQFGLKLDKRKIQLINKIQALGTKDVPVKLHRDVTAVVKVKISEA</sequence>
<keyword id="KW-0687">Ribonucleoprotein</keyword>
<keyword id="KW-0689">Ribosomal protein</keyword>
<keyword id="KW-0694">RNA-binding</keyword>
<keyword id="KW-0699">rRNA-binding</keyword>
<dbReference type="EMBL" id="AM406671">
    <property type="protein sequence ID" value="CAL98386.1"/>
    <property type="molecule type" value="Genomic_DNA"/>
</dbReference>
<dbReference type="RefSeq" id="WP_011835586.1">
    <property type="nucleotide sequence ID" value="NC_009004.1"/>
</dbReference>
<dbReference type="SMR" id="A2RM59"/>
<dbReference type="STRING" id="416870.llmg_1815"/>
<dbReference type="KEGG" id="llm:llmg_1815"/>
<dbReference type="eggNOG" id="COG0359">
    <property type="taxonomic scope" value="Bacteria"/>
</dbReference>
<dbReference type="HOGENOM" id="CLU_078938_3_2_9"/>
<dbReference type="OrthoDB" id="9788336at2"/>
<dbReference type="PhylomeDB" id="A2RM59"/>
<dbReference type="Proteomes" id="UP000000364">
    <property type="component" value="Chromosome"/>
</dbReference>
<dbReference type="GO" id="GO:1990904">
    <property type="term" value="C:ribonucleoprotein complex"/>
    <property type="evidence" value="ECO:0007669"/>
    <property type="project" value="UniProtKB-KW"/>
</dbReference>
<dbReference type="GO" id="GO:0005840">
    <property type="term" value="C:ribosome"/>
    <property type="evidence" value="ECO:0007669"/>
    <property type="project" value="UniProtKB-KW"/>
</dbReference>
<dbReference type="GO" id="GO:0019843">
    <property type="term" value="F:rRNA binding"/>
    <property type="evidence" value="ECO:0007669"/>
    <property type="project" value="UniProtKB-UniRule"/>
</dbReference>
<dbReference type="GO" id="GO:0003735">
    <property type="term" value="F:structural constituent of ribosome"/>
    <property type="evidence" value="ECO:0007669"/>
    <property type="project" value="InterPro"/>
</dbReference>
<dbReference type="GO" id="GO:0006412">
    <property type="term" value="P:translation"/>
    <property type="evidence" value="ECO:0007669"/>
    <property type="project" value="UniProtKB-UniRule"/>
</dbReference>
<dbReference type="FunFam" id="3.40.5.10:FF:000002">
    <property type="entry name" value="50S ribosomal protein L9"/>
    <property type="match status" value="1"/>
</dbReference>
<dbReference type="Gene3D" id="3.10.430.100">
    <property type="entry name" value="Ribosomal protein L9, C-terminal domain"/>
    <property type="match status" value="1"/>
</dbReference>
<dbReference type="Gene3D" id="3.40.5.10">
    <property type="entry name" value="Ribosomal protein L9, N-terminal domain"/>
    <property type="match status" value="1"/>
</dbReference>
<dbReference type="HAMAP" id="MF_00503">
    <property type="entry name" value="Ribosomal_bL9"/>
    <property type="match status" value="1"/>
</dbReference>
<dbReference type="InterPro" id="IPR000244">
    <property type="entry name" value="Ribosomal_bL9"/>
</dbReference>
<dbReference type="InterPro" id="IPR009027">
    <property type="entry name" value="Ribosomal_bL9/RNase_H1_N"/>
</dbReference>
<dbReference type="InterPro" id="IPR020594">
    <property type="entry name" value="Ribosomal_bL9_bac/chp"/>
</dbReference>
<dbReference type="InterPro" id="IPR020069">
    <property type="entry name" value="Ribosomal_bL9_C"/>
</dbReference>
<dbReference type="InterPro" id="IPR036791">
    <property type="entry name" value="Ribosomal_bL9_C_sf"/>
</dbReference>
<dbReference type="InterPro" id="IPR020070">
    <property type="entry name" value="Ribosomal_bL9_N"/>
</dbReference>
<dbReference type="InterPro" id="IPR036935">
    <property type="entry name" value="Ribosomal_bL9_N_sf"/>
</dbReference>
<dbReference type="NCBIfam" id="TIGR00158">
    <property type="entry name" value="L9"/>
    <property type="match status" value="1"/>
</dbReference>
<dbReference type="PANTHER" id="PTHR21368">
    <property type="entry name" value="50S RIBOSOMAL PROTEIN L9"/>
    <property type="match status" value="1"/>
</dbReference>
<dbReference type="Pfam" id="PF03948">
    <property type="entry name" value="Ribosomal_L9_C"/>
    <property type="match status" value="1"/>
</dbReference>
<dbReference type="Pfam" id="PF01281">
    <property type="entry name" value="Ribosomal_L9_N"/>
    <property type="match status" value="1"/>
</dbReference>
<dbReference type="SUPFAM" id="SSF55658">
    <property type="entry name" value="L9 N-domain-like"/>
    <property type="match status" value="1"/>
</dbReference>
<dbReference type="SUPFAM" id="SSF55653">
    <property type="entry name" value="Ribosomal protein L9 C-domain"/>
    <property type="match status" value="1"/>
</dbReference>
<dbReference type="PROSITE" id="PS00651">
    <property type="entry name" value="RIBOSOMAL_L9"/>
    <property type="match status" value="1"/>
</dbReference>
<gene>
    <name evidence="1" type="primary">rplI</name>
    <name type="ordered locus">llmg_1815</name>
</gene>
<proteinExistence type="inferred from homology"/>
<accession>A2RM59</accession>
<reference key="1">
    <citation type="journal article" date="2007" name="J. Bacteriol.">
        <title>The complete genome sequence of the lactic acid bacterial paradigm Lactococcus lactis subsp. cremoris MG1363.</title>
        <authorList>
            <person name="Wegmann U."/>
            <person name="O'Connell-Motherway M."/>
            <person name="Zomer A."/>
            <person name="Buist G."/>
            <person name="Shearman C."/>
            <person name="Canchaya C."/>
            <person name="Ventura M."/>
            <person name="Goesmann A."/>
            <person name="Gasson M.J."/>
            <person name="Kuipers O.P."/>
            <person name="van Sinderen D."/>
            <person name="Kok J."/>
        </authorList>
    </citation>
    <scope>NUCLEOTIDE SEQUENCE [LARGE SCALE GENOMIC DNA]</scope>
    <source>
        <strain>MG1363</strain>
    </source>
</reference>
<feature type="chain" id="PRO_1000014798" description="Large ribosomal subunit protein bL9">
    <location>
        <begin position="1"/>
        <end position="150"/>
    </location>
</feature>
<name>RL9_LACLM</name>
<comment type="function">
    <text evidence="1">Binds to the 23S rRNA.</text>
</comment>
<comment type="similarity">
    <text evidence="1">Belongs to the bacterial ribosomal protein bL9 family.</text>
</comment>
<organism>
    <name type="scientific">Lactococcus lactis subsp. cremoris (strain MG1363)</name>
    <dbReference type="NCBI Taxonomy" id="416870"/>
    <lineage>
        <taxon>Bacteria</taxon>
        <taxon>Bacillati</taxon>
        <taxon>Bacillota</taxon>
        <taxon>Bacilli</taxon>
        <taxon>Lactobacillales</taxon>
        <taxon>Streptococcaceae</taxon>
        <taxon>Lactococcus</taxon>
        <taxon>Lactococcus cremoris subsp. cremoris</taxon>
    </lineage>
</organism>
<evidence type="ECO:0000255" key="1">
    <source>
        <dbReference type="HAMAP-Rule" id="MF_00503"/>
    </source>
</evidence>
<evidence type="ECO:0000305" key="2"/>